<protein>
    <recommendedName>
        <fullName evidence="1">UDP-N-acetylenolpyruvoylglucosamine reductase 2</fullName>
        <ecNumber evidence="1">1.3.1.98</ecNumber>
    </recommendedName>
    <alternativeName>
        <fullName evidence="1">UDP-N-acetylmuramate dehydrogenase 2</fullName>
    </alternativeName>
</protein>
<dbReference type="EC" id="1.3.1.98" evidence="1"/>
<dbReference type="EMBL" id="AE017355">
    <property type="protein sequence ID" value="AAT63301.1"/>
    <property type="molecule type" value="Genomic_DNA"/>
</dbReference>
<dbReference type="RefSeq" id="YP_039087.1">
    <property type="nucleotide sequence ID" value="NC_005957.1"/>
</dbReference>
<dbReference type="SMR" id="Q6HBI9"/>
<dbReference type="KEGG" id="btk:BT9727_4778"/>
<dbReference type="PATRIC" id="fig|281309.8.peg.5084"/>
<dbReference type="HOGENOM" id="CLU_035304_1_1_9"/>
<dbReference type="UniPathway" id="UPA00219"/>
<dbReference type="Proteomes" id="UP000001301">
    <property type="component" value="Chromosome"/>
</dbReference>
<dbReference type="GO" id="GO:0005829">
    <property type="term" value="C:cytosol"/>
    <property type="evidence" value="ECO:0007669"/>
    <property type="project" value="TreeGrafter"/>
</dbReference>
<dbReference type="GO" id="GO:0071949">
    <property type="term" value="F:FAD binding"/>
    <property type="evidence" value="ECO:0007669"/>
    <property type="project" value="InterPro"/>
</dbReference>
<dbReference type="GO" id="GO:0008762">
    <property type="term" value="F:UDP-N-acetylmuramate dehydrogenase activity"/>
    <property type="evidence" value="ECO:0007669"/>
    <property type="project" value="UniProtKB-UniRule"/>
</dbReference>
<dbReference type="GO" id="GO:0051301">
    <property type="term" value="P:cell division"/>
    <property type="evidence" value="ECO:0007669"/>
    <property type="project" value="UniProtKB-KW"/>
</dbReference>
<dbReference type="GO" id="GO:0071555">
    <property type="term" value="P:cell wall organization"/>
    <property type="evidence" value="ECO:0007669"/>
    <property type="project" value="UniProtKB-KW"/>
</dbReference>
<dbReference type="GO" id="GO:0009252">
    <property type="term" value="P:peptidoglycan biosynthetic process"/>
    <property type="evidence" value="ECO:0007669"/>
    <property type="project" value="UniProtKB-UniRule"/>
</dbReference>
<dbReference type="GO" id="GO:0008360">
    <property type="term" value="P:regulation of cell shape"/>
    <property type="evidence" value="ECO:0007669"/>
    <property type="project" value="UniProtKB-KW"/>
</dbReference>
<dbReference type="FunFam" id="3.90.78.10:FF:000001">
    <property type="entry name" value="UDP-N-acetylenolpyruvoylglucosamine reductase"/>
    <property type="match status" value="1"/>
</dbReference>
<dbReference type="Gene3D" id="3.30.465.10">
    <property type="match status" value="1"/>
</dbReference>
<dbReference type="Gene3D" id="3.90.78.10">
    <property type="entry name" value="UDP-N-acetylenolpyruvoylglucosamine reductase, C-terminal domain"/>
    <property type="match status" value="1"/>
</dbReference>
<dbReference type="Gene3D" id="3.30.43.10">
    <property type="entry name" value="Uridine Diphospho-n-acetylenolpyruvylglucosamine Reductase, domain 2"/>
    <property type="match status" value="1"/>
</dbReference>
<dbReference type="HAMAP" id="MF_00037">
    <property type="entry name" value="MurB"/>
    <property type="match status" value="1"/>
</dbReference>
<dbReference type="InterPro" id="IPR016166">
    <property type="entry name" value="FAD-bd_PCMH"/>
</dbReference>
<dbReference type="InterPro" id="IPR036318">
    <property type="entry name" value="FAD-bd_PCMH-like_sf"/>
</dbReference>
<dbReference type="InterPro" id="IPR016167">
    <property type="entry name" value="FAD-bd_PCMH_sub1"/>
</dbReference>
<dbReference type="InterPro" id="IPR016169">
    <property type="entry name" value="FAD-bd_PCMH_sub2"/>
</dbReference>
<dbReference type="InterPro" id="IPR003170">
    <property type="entry name" value="MurB"/>
</dbReference>
<dbReference type="InterPro" id="IPR011601">
    <property type="entry name" value="MurB_C"/>
</dbReference>
<dbReference type="InterPro" id="IPR036635">
    <property type="entry name" value="MurB_C_sf"/>
</dbReference>
<dbReference type="InterPro" id="IPR006094">
    <property type="entry name" value="Oxid_FAD_bind_N"/>
</dbReference>
<dbReference type="NCBIfam" id="TIGR00179">
    <property type="entry name" value="murB"/>
    <property type="match status" value="1"/>
</dbReference>
<dbReference type="NCBIfam" id="NF010480">
    <property type="entry name" value="PRK13905.1"/>
    <property type="match status" value="1"/>
</dbReference>
<dbReference type="PANTHER" id="PTHR21071">
    <property type="entry name" value="UDP-N-ACETYLENOLPYRUVOYLGLUCOSAMINE REDUCTASE"/>
    <property type="match status" value="1"/>
</dbReference>
<dbReference type="PANTHER" id="PTHR21071:SF4">
    <property type="entry name" value="UDP-N-ACETYLENOLPYRUVOYLGLUCOSAMINE REDUCTASE"/>
    <property type="match status" value="1"/>
</dbReference>
<dbReference type="Pfam" id="PF01565">
    <property type="entry name" value="FAD_binding_4"/>
    <property type="match status" value="1"/>
</dbReference>
<dbReference type="Pfam" id="PF02873">
    <property type="entry name" value="MurB_C"/>
    <property type="match status" value="1"/>
</dbReference>
<dbReference type="SUPFAM" id="SSF56176">
    <property type="entry name" value="FAD-binding/transporter-associated domain-like"/>
    <property type="match status" value="1"/>
</dbReference>
<dbReference type="SUPFAM" id="SSF56194">
    <property type="entry name" value="Uridine diphospho-N-Acetylenolpyruvylglucosamine reductase, MurB, C-terminal domain"/>
    <property type="match status" value="1"/>
</dbReference>
<dbReference type="PROSITE" id="PS51387">
    <property type="entry name" value="FAD_PCMH"/>
    <property type="match status" value="1"/>
</dbReference>
<organism>
    <name type="scientific">Bacillus thuringiensis subsp. konkukian (strain 97-27)</name>
    <dbReference type="NCBI Taxonomy" id="281309"/>
    <lineage>
        <taxon>Bacteria</taxon>
        <taxon>Bacillati</taxon>
        <taxon>Bacillota</taxon>
        <taxon>Bacilli</taxon>
        <taxon>Bacillales</taxon>
        <taxon>Bacillaceae</taxon>
        <taxon>Bacillus</taxon>
        <taxon>Bacillus cereus group</taxon>
    </lineage>
</organism>
<comment type="function">
    <text evidence="1">Cell wall formation.</text>
</comment>
<comment type="catalytic activity">
    <reaction evidence="1">
        <text>UDP-N-acetyl-alpha-D-muramate + NADP(+) = UDP-N-acetyl-3-O-(1-carboxyvinyl)-alpha-D-glucosamine + NADPH + H(+)</text>
        <dbReference type="Rhea" id="RHEA:12248"/>
        <dbReference type="ChEBI" id="CHEBI:15378"/>
        <dbReference type="ChEBI" id="CHEBI:57783"/>
        <dbReference type="ChEBI" id="CHEBI:58349"/>
        <dbReference type="ChEBI" id="CHEBI:68483"/>
        <dbReference type="ChEBI" id="CHEBI:70757"/>
        <dbReference type="EC" id="1.3.1.98"/>
    </reaction>
</comment>
<comment type="cofactor">
    <cofactor evidence="1">
        <name>FAD</name>
        <dbReference type="ChEBI" id="CHEBI:57692"/>
    </cofactor>
</comment>
<comment type="pathway">
    <text evidence="1">Cell wall biogenesis; peptidoglycan biosynthesis.</text>
</comment>
<comment type="subcellular location">
    <subcellularLocation>
        <location evidence="1">Cytoplasm</location>
    </subcellularLocation>
</comment>
<comment type="similarity">
    <text evidence="1">Belongs to the MurB family.</text>
</comment>
<keyword id="KW-0131">Cell cycle</keyword>
<keyword id="KW-0132">Cell division</keyword>
<keyword id="KW-0133">Cell shape</keyword>
<keyword id="KW-0961">Cell wall biogenesis/degradation</keyword>
<keyword id="KW-0963">Cytoplasm</keyword>
<keyword id="KW-0274">FAD</keyword>
<keyword id="KW-0285">Flavoprotein</keyword>
<keyword id="KW-0521">NADP</keyword>
<keyword id="KW-0560">Oxidoreductase</keyword>
<keyword id="KW-0573">Peptidoglycan synthesis</keyword>
<feature type="chain" id="PRO_0000224661" description="UDP-N-acetylenolpyruvoylglucosamine reductase 2">
    <location>
        <begin position="1"/>
        <end position="305"/>
    </location>
</feature>
<feature type="domain" description="FAD-binding PCMH-type" evidence="1">
    <location>
        <begin position="33"/>
        <end position="197"/>
    </location>
</feature>
<feature type="active site" evidence="1">
    <location>
        <position position="176"/>
    </location>
</feature>
<feature type="active site" description="Proton donor" evidence="1">
    <location>
        <position position="226"/>
    </location>
</feature>
<feature type="active site" evidence="1">
    <location>
        <position position="296"/>
    </location>
</feature>
<gene>
    <name evidence="1" type="primary">murB2</name>
    <name type="ordered locus">BT9727_4778</name>
</gene>
<reference key="1">
    <citation type="journal article" date="2006" name="J. Bacteriol.">
        <title>Pathogenomic sequence analysis of Bacillus cereus and Bacillus thuringiensis isolates closely related to Bacillus anthracis.</title>
        <authorList>
            <person name="Han C.S."/>
            <person name="Xie G."/>
            <person name="Challacombe J.F."/>
            <person name="Altherr M.R."/>
            <person name="Bhotika S.S."/>
            <person name="Bruce D."/>
            <person name="Campbell C.S."/>
            <person name="Campbell M.L."/>
            <person name="Chen J."/>
            <person name="Chertkov O."/>
            <person name="Cleland C."/>
            <person name="Dimitrijevic M."/>
            <person name="Doggett N.A."/>
            <person name="Fawcett J.J."/>
            <person name="Glavina T."/>
            <person name="Goodwin L.A."/>
            <person name="Hill K.K."/>
            <person name="Hitchcock P."/>
            <person name="Jackson P.J."/>
            <person name="Keim P."/>
            <person name="Kewalramani A.R."/>
            <person name="Longmire J."/>
            <person name="Lucas S."/>
            <person name="Malfatti S."/>
            <person name="McMurry K."/>
            <person name="Meincke L.J."/>
            <person name="Misra M."/>
            <person name="Moseman B.L."/>
            <person name="Mundt M."/>
            <person name="Munk A.C."/>
            <person name="Okinaka R.T."/>
            <person name="Parson-Quintana B."/>
            <person name="Reilly L.P."/>
            <person name="Richardson P."/>
            <person name="Robinson D.L."/>
            <person name="Rubin E."/>
            <person name="Saunders E."/>
            <person name="Tapia R."/>
            <person name="Tesmer J.G."/>
            <person name="Thayer N."/>
            <person name="Thompson L.S."/>
            <person name="Tice H."/>
            <person name="Ticknor L.O."/>
            <person name="Wills P.L."/>
            <person name="Brettin T.S."/>
            <person name="Gilna P."/>
        </authorList>
    </citation>
    <scope>NUCLEOTIDE SEQUENCE [LARGE SCALE GENOMIC DNA]</scope>
    <source>
        <strain>97-27</strain>
    </source>
</reference>
<name>MURB2_BACHK</name>
<accession>Q6HBI9</accession>
<evidence type="ECO:0000255" key="1">
    <source>
        <dbReference type="HAMAP-Rule" id="MF_00037"/>
    </source>
</evidence>
<proteinExistence type="inferred from homology"/>
<sequence>MNMQEVYEYLSTVLPEGHVKQDEMLKNHTHIKVGGKADVFVAPTNYDEIQEVIKYANKYNIPVTFLGNGSNVIIKDGGIRGITVSLIHITGVTVTGTTIVAQCGAAIIDVSRIALDHNLTGLEFACGIPGSVGGALYMNAGAYGGEISFVLTEAVVMTGDGELRTLTKEAFEFGYRKSVFANNHYIILEARFELEEGLYEEIKAKMDDLTFKRESKQPLEYPSCGSVFKRPPNNFAGKLIQESGLQGKRIGGVEVSLKHAGFMVNVDNGTAQDYIDLIHFVQKTVEEKFGVKLEREVRIIGEDKE</sequence>